<evidence type="ECO:0000255" key="1">
    <source>
        <dbReference type="HAMAP-Rule" id="MF_01390"/>
    </source>
</evidence>
<sequence length="507" mass="60926">MEQLKIDLNLGRSQQHDFIYPLIFQEYIYALAHDRGLNRSIFLENAGYDNKFSLLIVKRLITHLITQMYQQNHFLFSVNDSNQKKILGYNTNLYSQMIFEGFAVVVEIPFYLRLLSFLEGKERMKSHNLRSIHSIFPFLEDKFAFLNYVLDIQIPHPIHLEIFIQTLRYWVKDASSLHLLRFFLHEYPIWNSFLIRKKSSFSFSKRNQRFFFFLYNFHVCEYESIFVFLRNQSFHLRSISYETFLERISFYRKIELEEVFTKDFKAILWVFKEPFLHYVRYRGNALLASKGTSLLMNKWKHYIVNFWQCYFYIWSQPRRIDINQLSNHSLDFLGYLSSVRLKHLMVRSQMIENSFLIENASKKFDTLMPITPMIGSLSKAKFCNVLGHPMSKPAWSALSDSDIIERFGRIYRNLSHYYSGSLKKRNLYRIKYILRLSCARTLARKHKSTVRAFLKRLGMGLLEEFFTEEEQVFYLTLPKASSTSGELYRRRVWYLDIICINHMSNYE</sequence>
<name>MATK_KALPR</name>
<geneLocation type="chloroplast"/>
<feature type="chain" id="PRO_0000143490" description="Maturase K">
    <location>
        <begin position="1"/>
        <end position="507"/>
    </location>
</feature>
<dbReference type="EMBL" id="U61352">
    <property type="protein sequence ID" value="AAB93736.1"/>
    <property type="molecule type" value="Genomic_DNA"/>
</dbReference>
<dbReference type="GO" id="GO:0009507">
    <property type="term" value="C:chloroplast"/>
    <property type="evidence" value="ECO:0007669"/>
    <property type="project" value="UniProtKB-SubCell"/>
</dbReference>
<dbReference type="GO" id="GO:0003723">
    <property type="term" value="F:RNA binding"/>
    <property type="evidence" value="ECO:0007669"/>
    <property type="project" value="UniProtKB-KW"/>
</dbReference>
<dbReference type="GO" id="GO:0006397">
    <property type="term" value="P:mRNA processing"/>
    <property type="evidence" value="ECO:0007669"/>
    <property type="project" value="UniProtKB-KW"/>
</dbReference>
<dbReference type="GO" id="GO:0008380">
    <property type="term" value="P:RNA splicing"/>
    <property type="evidence" value="ECO:0007669"/>
    <property type="project" value="UniProtKB-UniRule"/>
</dbReference>
<dbReference type="GO" id="GO:0008033">
    <property type="term" value="P:tRNA processing"/>
    <property type="evidence" value="ECO:0007669"/>
    <property type="project" value="UniProtKB-KW"/>
</dbReference>
<dbReference type="HAMAP" id="MF_01390">
    <property type="entry name" value="MatK"/>
    <property type="match status" value="1"/>
</dbReference>
<dbReference type="InterPro" id="IPR024937">
    <property type="entry name" value="Domain_X"/>
</dbReference>
<dbReference type="InterPro" id="IPR002866">
    <property type="entry name" value="Maturase_MatK"/>
</dbReference>
<dbReference type="InterPro" id="IPR024942">
    <property type="entry name" value="Maturase_MatK_N"/>
</dbReference>
<dbReference type="PANTHER" id="PTHR34811">
    <property type="entry name" value="MATURASE K"/>
    <property type="match status" value="1"/>
</dbReference>
<dbReference type="PANTHER" id="PTHR34811:SF1">
    <property type="entry name" value="MATURASE K"/>
    <property type="match status" value="1"/>
</dbReference>
<dbReference type="Pfam" id="PF01348">
    <property type="entry name" value="Intron_maturas2"/>
    <property type="match status" value="1"/>
</dbReference>
<dbReference type="Pfam" id="PF01824">
    <property type="entry name" value="MatK_N"/>
    <property type="match status" value="1"/>
</dbReference>
<organism>
    <name type="scientific">Kalmia procumbens</name>
    <name type="common">Alpine azalea</name>
    <name type="synonym">Loiseleuria procumbens</name>
    <dbReference type="NCBI Taxonomy" id="45912"/>
    <lineage>
        <taxon>Eukaryota</taxon>
        <taxon>Viridiplantae</taxon>
        <taxon>Streptophyta</taxon>
        <taxon>Embryophyta</taxon>
        <taxon>Tracheophyta</taxon>
        <taxon>Spermatophyta</taxon>
        <taxon>Magnoliopsida</taxon>
        <taxon>eudicotyledons</taxon>
        <taxon>Gunneridae</taxon>
        <taxon>Pentapetalae</taxon>
        <taxon>asterids</taxon>
        <taxon>Ericales</taxon>
        <taxon>Ericaceae</taxon>
        <taxon>Ericoideae</taxon>
        <taxon>Phyllodoceae</taxon>
        <taxon>Kalmia</taxon>
    </lineage>
</organism>
<keyword id="KW-0150">Chloroplast</keyword>
<keyword id="KW-0507">mRNA processing</keyword>
<keyword id="KW-0934">Plastid</keyword>
<keyword id="KW-0694">RNA-binding</keyword>
<keyword id="KW-0819">tRNA processing</keyword>
<proteinExistence type="inferred from homology"/>
<gene>
    <name evidence="1" type="primary">matK</name>
</gene>
<comment type="function">
    <text evidence="1">Usually encoded in the trnK tRNA gene intron. Probably assists in splicing its own and other chloroplast group II introns.</text>
</comment>
<comment type="subcellular location">
    <subcellularLocation>
        <location>Plastid</location>
        <location>Chloroplast</location>
    </subcellularLocation>
</comment>
<comment type="similarity">
    <text evidence="1">Belongs to the intron maturase 2 family. MatK subfamily.</text>
</comment>
<protein>
    <recommendedName>
        <fullName evidence="1">Maturase K</fullName>
    </recommendedName>
    <alternativeName>
        <fullName evidence="1">Intron maturase</fullName>
    </alternativeName>
</protein>
<reference key="1">
    <citation type="journal article" date="1997" name="Am. J. Bot.">
        <title>Phylogenetics relationships of Rhododendroideae (Ericaceae).</title>
        <authorList>
            <person name="Kron K.A."/>
        </authorList>
    </citation>
    <scope>NUCLEOTIDE SEQUENCE [GENOMIC DNA]</scope>
</reference>
<accession>O47169</accession>